<accession>Q3AF11</accession>
<feature type="chain" id="PRO_1000010392" description="Heat-inducible transcription repressor HrcA">
    <location>
        <begin position="1"/>
        <end position="341"/>
    </location>
</feature>
<evidence type="ECO:0000255" key="1">
    <source>
        <dbReference type="HAMAP-Rule" id="MF_00081"/>
    </source>
</evidence>
<gene>
    <name evidence="1" type="primary">hrcA</name>
    <name type="ordered locus">CHY_0412</name>
</gene>
<proteinExistence type="inferred from homology"/>
<dbReference type="EMBL" id="CP000141">
    <property type="protein sequence ID" value="ABB14801.1"/>
    <property type="molecule type" value="Genomic_DNA"/>
</dbReference>
<dbReference type="RefSeq" id="WP_011343349.1">
    <property type="nucleotide sequence ID" value="NC_007503.1"/>
</dbReference>
<dbReference type="SMR" id="Q3AF11"/>
<dbReference type="FunCoup" id="Q3AF11">
    <property type="interactions" value="195"/>
</dbReference>
<dbReference type="STRING" id="246194.CHY_0412"/>
<dbReference type="KEGG" id="chy:CHY_0412"/>
<dbReference type="eggNOG" id="COG1420">
    <property type="taxonomic scope" value="Bacteria"/>
</dbReference>
<dbReference type="HOGENOM" id="CLU_050019_1_0_9"/>
<dbReference type="InParanoid" id="Q3AF11"/>
<dbReference type="OrthoDB" id="9783139at2"/>
<dbReference type="Proteomes" id="UP000002706">
    <property type="component" value="Chromosome"/>
</dbReference>
<dbReference type="GO" id="GO:0003677">
    <property type="term" value="F:DNA binding"/>
    <property type="evidence" value="ECO:0007669"/>
    <property type="project" value="InterPro"/>
</dbReference>
<dbReference type="GO" id="GO:0045892">
    <property type="term" value="P:negative regulation of DNA-templated transcription"/>
    <property type="evidence" value="ECO:0007669"/>
    <property type="project" value="UniProtKB-UniRule"/>
</dbReference>
<dbReference type="FunFam" id="1.10.10.10:FF:000049">
    <property type="entry name" value="Heat-inducible transcription repressor HrcA"/>
    <property type="match status" value="1"/>
</dbReference>
<dbReference type="Gene3D" id="3.30.450.40">
    <property type="match status" value="1"/>
</dbReference>
<dbReference type="Gene3D" id="3.30.390.60">
    <property type="entry name" value="Heat-inducible transcription repressor hrca homolog, domain 3"/>
    <property type="match status" value="1"/>
</dbReference>
<dbReference type="Gene3D" id="1.10.10.10">
    <property type="entry name" value="Winged helix-like DNA-binding domain superfamily/Winged helix DNA-binding domain"/>
    <property type="match status" value="1"/>
</dbReference>
<dbReference type="HAMAP" id="MF_00081">
    <property type="entry name" value="HrcA"/>
    <property type="match status" value="1"/>
</dbReference>
<dbReference type="InterPro" id="IPR029016">
    <property type="entry name" value="GAF-like_dom_sf"/>
</dbReference>
<dbReference type="InterPro" id="IPR002571">
    <property type="entry name" value="HrcA"/>
</dbReference>
<dbReference type="InterPro" id="IPR021153">
    <property type="entry name" value="HrcA_C"/>
</dbReference>
<dbReference type="InterPro" id="IPR036388">
    <property type="entry name" value="WH-like_DNA-bd_sf"/>
</dbReference>
<dbReference type="InterPro" id="IPR036390">
    <property type="entry name" value="WH_DNA-bd_sf"/>
</dbReference>
<dbReference type="InterPro" id="IPR023120">
    <property type="entry name" value="WHTH_transcript_rep_HrcA_IDD"/>
</dbReference>
<dbReference type="NCBIfam" id="TIGR00331">
    <property type="entry name" value="hrcA"/>
    <property type="match status" value="1"/>
</dbReference>
<dbReference type="PANTHER" id="PTHR34824">
    <property type="entry name" value="HEAT-INDUCIBLE TRANSCRIPTION REPRESSOR HRCA"/>
    <property type="match status" value="1"/>
</dbReference>
<dbReference type="PANTHER" id="PTHR34824:SF1">
    <property type="entry name" value="HEAT-INDUCIBLE TRANSCRIPTION REPRESSOR HRCA"/>
    <property type="match status" value="1"/>
</dbReference>
<dbReference type="Pfam" id="PF01628">
    <property type="entry name" value="HrcA"/>
    <property type="match status" value="1"/>
</dbReference>
<dbReference type="PIRSF" id="PIRSF005485">
    <property type="entry name" value="HrcA"/>
    <property type="match status" value="1"/>
</dbReference>
<dbReference type="SUPFAM" id="SSF55781">
    <property type="entry name" value="GAF domain-like"/>
    <property type="match status" value="1"/>
</dbReference>
<dbReference type="SUPFAM" id="SSF46785">
    <property type="entry name" value="Winged helix' DNA-binding domain"/>
    <property type="match status" value="1"/>
</dbReference>
<sequence>MIDERKRKILMAIVQDYISTAEPVGSRTIAKKYDLGISPATIRNEMADLEEMGYLEQPHTSAGRIPSVLGYRYYVDYLMEKPSLSREEEEFIRKVYEDKINSIGDLLEKTGKVLSSLTRYTAVVLSPEAGKVPLKHLQLVLLQPGKVLLIIVLEDGTLHHRAFEVPGDITAQDLEKVSAILNAKLYGVNPEKIRYSLIKEIYYELAQHQNLINITLELISNLNQDNQEHKIILGGLINLFNQPEFKNVEKVKTLLSILEQEEKIREIFSQLNVGVNVKIGSELNLKEIEDCSMIAAGYFSYGNSVGFIGVLGPTRMEYAKTVATVEFLSKYLSEIIGNKNF</sequence>
<comment type="function">
    <text evidence="1">Negative regulator of class I heat shock genes (grpE-dnaK-dnaJ and groELS operons). Prevents heat-shock induction of these operons.</text>
</comment>
<comment type="similarity">
    <text evidence="1">Belongs to the HrcA family.</text>
</comment>
<protein>
    <recommendedName>
        <fullName evidence="1">Heat-inducible transcription repressor HrcA</fullName>
    </recommendedName>
</protein>
<reference key="1">
    <citation type="journal article" date="2005" name="PLoS Genet.">
        <title>Life in hot carbon monoxide: the complete genome sequence of Carboxydothermus hydrogenoformans Z-2901.</title>
        <authorList>
            <person name="Wu M."/>
            <person name="Ren Q."/>
            <person name="Durkin A.S."/>
            <person name="Daugherty S.C."/>
            <person name="Brinkac L.M."/>
            <person name="Dodson R.J."/>
            <person name="Madupu R."/>
            <person name="Sullivan S.A."/>
            <person name="Kolonay J.F."/>
            <person name="Nelson W.C."/>
            <person name="Tallon L.J."/>
            <person name="Jones K.M."/>
            <person name="Ulrich L.E."/>
            <person name="Gonzalez J.M."/>
            <person name="Zhulin I.B."/>
            <person name="Robb F.T."/>
            <person name="Eisen J.A."/>
        </authorList>
    </citation>
    <scope>NUCLEOTIDE SEQUENCE [LARGE SCALE GENOMIC DNA]</scope>
    <source>
        <strain>ATCC BAA-161 / DSM 6008 / Z-2901</strain>
    </source>
</reference>
<keyword id="KW-1185">Reference proteome</keyword>
<keyword id="KW-0678">Repressor</keyword>
<keyword id="KW-0346">Stress response</keyword>
<keyword id="KW-0804">Transcription</keyword>
<keyword id="KW-0805">Transcription regulation</keyword>
<name>HRCA_CARHZ</name>
<organism>
    <name type="scientific">Carboxydothermus hydrogenoformans (strain ATCC BAA-161 / DSM 6008 / Z-2901)</name>
    <dbReference type="NCBI Taxonomy" id="246194"/>
    <lineage>
        <taxon>Bacteria</taxon>
        <taxon>Bacillati</taxon>
        <taxon>Bacillota</taxon>
        <taxon>Clostridia</taxon>
        <taxon>Thermoanaerobacterales</taxon>
        <taxon>Thermoanaerobacteraceae</taxon>
        <taxon>Carboxydothermus</taxon>
    </lineage>
</organism>